<keyword id="KW-1185">Reference proteome</keyword>
<keyword id="KW-0687">Ribonucleoprotein</keyword>
<keyword id="KW-0689">Ribosomal protein</keyword>
<keyword id="KW-0694">RNA-binding</keyword>
<keyword id="KW-0699">rRNA-binding</keyword>
<gene>
    <name evidence="1" type="primary">rpsQ</name>
    <name type="ordered locus">ECS88_3698</name>
</gene>
<reference key="1">
    <citation type="journal article" date="2009" name="PLoS Genet.">
        <title>Organised genome dynamics in the Escherichia coli species results in highly diverse adaptive paths.</title>
        <authorList>
            <person name="Touchon M."/>
            <person name="Hoede C."/>
            <person name="Tenaillon O."/>
            <person name="Barbe V."/>
            <person name="Baeriswyl S."/>
            <person name="Bidet P."/>
            <person name="Bingen E."/>
            <person name="Bonacorsi S."/>
            <person name="Bouchier C."/>
            <person name="Bouvet O."/>
            <person name="Calteau A."/>
            <person name="Chiapello H."/>
            <person name="Clermont O."/>
            <person name="Cruveiller S."/>
            <person name="Danchin A."/>
            <person name="Diard M."/>
            <person name="Dossat C."/>
            <person name="Karoui M.E."/>
            <person name="Frapy E."/>
            <person name="Garry L."/>
            <person name="Ghigo J.M."/>
            <person name="Gilles A.M."/>
            <person name="Johnson J."/>
            <person name="Le Bouguenec C."/>
            <person name="Lescat M."/>
            <person name="Mangenot S."/>
            <person name="Martinez-Jehanne V."/>
            <person name="Matic I."/>
            <person name="Nassif X."/>
            <person name="Oztas S."/>
            <person name="Petit M.A."/>
            <person name="Pichon C."/>
            <person name="Rouy Z."/>
            <person name="Ruf C.S."/>
            <person name="Schneider D."/>
            <person name="Tourret J."/>
            <person name="Vacherie B."/>
            <person name="Vallenet D."/>
            <person name="Medigue C."/>
            <person name="Rocha E.P.C."/>
            <person name="Denamur E."/>
        </authorList>
    </citation>
    <scope>NUCLEOTIDE SEQUENCE [LARGE SCALE GENOMIC DNA]</scope>
    <source>
        <strain>S88 / ExPEC</strain>
    </source>
</reference>
<name>RS17_ECO45</name>
<protein>
    <recommendedName>
        <fullName evidence="1">Small ribosomal subunit protein uS17</fullName>
    </recommendedName>
    <alternativeName>
        <fullName evidence="2">30S ribosomal protein S17</fullName>
    </alternativeName>
</protein>
<comment type="function">
    <text evidence="1">One of the primary rRNA binding proteins, it binds specifically to the 5'-end of 16S ribosomal RNA.</text>
</comment>
<comment type="subunit">
    <text evidence="1">Part of the 30S ribosomal subunit.</text>
</comment>
<comment type="similarity">
    <text evidence="1">Belongs to the universal ribosomal protein uS17 family.</text>
</comment>
<accession>B7MCS6</accession>
<feature type="chain" id="PRO_1000143249" description="Small ribosomal subunit protein uS17">
    <location>
        <begin position="1"/>
        <end position="84"/>
    </location>
</feature>
<proteinExistence type="inferred from homology"/>
<dbReference type="EMBL" id="CU928161">
    <property type="protein sequence ID" value="CAR04915.1"/>
    <property type="molecule type" value="Genomic_DNA"/>
</dbReference>
<dbReference type="RefSeq" id="WP_000130100.1">
    <property type="nucleotide sequence ID" value="NC_011742.1"/>
</dbReference>
<dbReference type="EMDB" id="EMD-7014"/>
<dbReference type="EMDB" id="EMD-7015"/>
<dbReference type="EMDB" id="EMD-7016"/>
<dbReference type="EMDB" id="EMD-7970"/>
<dbReference type="EMDB" id="EMD-8621"/>
<dbReference type="EMDB" id="EMD-8826"/>
<dbReference type="EMDB" id="EMD-8829"/>
<dbReference type="SMR" id="B7MCS6"/>
<dbReference type="IntAct" id="B7MCS6">
    <property type="interactions" value="1"/>
</dbReference>
<dbReference type="GeneID" id="93778676"/>
<dbReference type="KEGG" id="ecz:ECS88_3698"/>
<dbReference type="HOGENOM" id="CLU_073626_1_1_6"/>
<dbReference type="Proteomes" id="UP000000747">
    <property type="component" value="Chromosome"/>
</dbReference>
<dbReference type="GO" id="GO:0022627">
    <property type="term" value="C:cytosolic small ribosomal subunit"/>
    <property type="evidence" value="ECO:0007669"/>
    <property type="project" value="TreeGrafter"/>
</dbReference>
<dbReference type="GO" id="GO:0019843">
    <property type="term" value="F:rRNA binding"/>
    <property type="evidence" value="ECO:0007669"/>
    <property type="project" value="UniProtKB-UniRule"/>
</dbReference>
<dbReference type="GO" id="GO:0003735">
    <property type="term" value="F:structural constituent of ribosome"/>
    <property type="evidence" value="ECO:0007669"/>
    <property type="project" value="InterPro"/>
</dbReference>
<dbReference type="GO" id="GO:0006412">
    <property type="term" value="P:translation"/>
    <property type="evidence" value="ECO:0007669"/>
    <property type="project" value="UniProtKB-UniRule"/>
</dbReference>
<dbReference type="CDD" id="cd00364">
    <property type="entry name" value="Ribosomal_uS17"/>
    <property type="match status" value="1"/>
</dbReference>
<dbReference type="FunFam" id="2.40.50.140:FF:000014">
    <property type="entry name" value="30S ribosomal protein S17"/>
    <property type="match status" value="1"/>
</dbReference>
<dbReference type="Gene3D" id="2.40.50.140">
    <property type="entry name" value="Nucleic acid-binding proteins"/>
    <property type="match status" value="1"/>
</dbReference>
<dbReference type="HAMAP" id="MF_01345_B">
    <property type="entry name" value="Ribosomal_uS17_B"/>
    <property type="match status" value="1"/>
</dbReference>
<dbReference type="InterPro" id="IPR012340">
    <property type="entry name" value="NA-bd_OB-fold"/>
</dbReference>
<dbReference type="InterPro" id="IPR000266">
    <property type="entry name" value="Ribosomal_uS17"/>
</dbReference>
<dbReference type="InterPro" id="IPR019984">
    <property type="entry name" value="Ribosomal_uS17_bact/chlr"/>
</dbReference>
<dbReference type="InterPro" id="IPR019979">
    <property type="entry name" value="Ribosomal_uS17_CS"/>
</dbReference>
<dbReference type="NCBIfam" id="NF004123">
    <property type="entry name" value="PRK05610.1"/>
    <property type="match status" value="1"/>
</dbReference>
<dbReference type="NCBIfam" id="TIGR03635">
    <property type="entry name" value="uS17_bact"/>
    <property type="match status" value="1"/>
</dbReference>
<dbReference type="PANTHER" id="PTHR10744">
    <property type="entry name" value="40S RIBOSOMAL PROTEIN S11 FAMILY MEMBER"/>
    <property type="match status" value="1"/>
</dbReference>
<dbReference type="PANTHER" id="PTHR10744:SF1">
    <property type="entry name" value="SMALL RIBOSOMAL SUBUNIT PROTEIN US17M"/>
    <property type="match status" value="1"/>
</dbReference>
<dbReference type="Pfam" id="PF00366">
    <property type="entry name" value="Ribosomal_S17"/>
    <property type="match status" value="1"/>
</dbReference>
<dbReference type="PRINTS" id="PR00973">
    <property type="entry name" value="RIBOSOMALS17"/>
</dbReference>
<dbReference type="SUPFAM" id="SSF50249">
    <property type="entry name" value="Nucleic acid-binding proteins"/>
    <property type="match status" value="1"/>
</dbReference>
<dbReference type="PROSITE" id="PS00056">
    <property type="entry name" value="RIBOSOMAL_S17"/>
    <property type="match status" value="1"/>
</dbReference>
<evidence type="ECO:0000255" key="1">
    <source>
        <dbReference type="HAMAP-Rule" id="MF_01345"/>
    </source>
</evidence>
<evidence type="ECO:0000305" key="2"/>
<organism>
    <name type="scientific">Escherichia coli O45:K1 (strain S88 / ExPEC)</name>
    <dbReference type="NCBI Taxonomy" id="585035"/>
    <lineage>
        <taxon>Bacteria</taxon>
        <taxon>Pseudomonadati</taxon>
        <taxon>Pseudomonadota</taxon>
        <taxon>Gammaproteobacteria</taxon>
        <taxon>Enterobacterales</taxon>
        <taxon>Enterobacteriaceae</taxon>
        <taxon>Escherichia</taxon>
    </lineage>
</organism>
<sequence length="84" mass="9704">MTDKIRTLQGRVVSDKMEKSIVVAIERFVKHPIYGKFIKRTTKLHVHDENNECGIGDVVEIRECRPLSKTKSWTLVRVVEKAVL</sequence>